<comment type="catalytic activity">
    <reaction>
        <text>(R)-pantothenate + ATP = (R)-4'-phosphopantothenate + ADP + H(+)</text>
        <dbReference type="Rhea" id="RHEA:16373"/>
        <dbReference type="ChEBI" id="CHEBI:10986"/>
        <dbReference type="ChEBI" id="CHEBI:15378"/>
        <dbReference type="ChEBI" id="CHEBI:29032"/>
        <dbReference type="ChEBI" id="CHEBI:30616"/>
        <dbReference type="ChEBI" id="CHEBI:456216"/>
        <dbReference type="EC" id="2.7.1.33"/>
    </reaction>
</comment>
<comment type="pathway">
    <text>Cofactor biosynthesis; coenzyme A biosynthesis; CoA from (R)-pantothenate: step 1/5.</text>
</comment>
<comment type="subcellular location">
    <subcellularLocation>
        <location evidence="1">Cytoplasm</location>
    </subcellularLocation>
</comment>
<comment type="similarity">
    <text evidence="3">Belongs to the prokaryotic pantothenate kinase family.</text>
</comment>
<comment type="sequence caution" evidence="3">
    <conflict type="erroneous initiation">
        <sequence resource="EMBL-CDS" id="AAG59174"/>
    </conflict>
    <text>Truncated N-terminus.</text>
</comment>
<comment type="sequence caution" evidence="3">
    <conflict type="erroneous initiation">
        <sequence resource="EMBL-CDS" id="BAB38324"/>
    </conflict>
    <text>Truncated N-terminus.</text>
</comment>
<accession>P0A6I5</accession>
<accession>P15044</accession>
<evidence type="ECO:0000250" key="1"/>
<evidence type="ECO:0000255" key="2"/>
<evidence type="ECO:0000305" key="3"/>
<dbReference type="EC" id="2.7.1.33"/>
<dbReference type="EMBL" id="AE005174">
    <property type="protein sequence ID" value="AAG59174.1"/>
    <property type="status" value="ALT_INIT"/>
    <property type="molecule type" value="Genomic_DNA"/>
</dbReference>
<dbReference type="EMBL" id="BA000007">
    <property type="protein sequence ID" value="BAB38324.2"/>
    <property type="status" value="ALT_INIT"/>
    <property type="molecule type" value="Genomic_DNA"/>
</dbReference>
<dbReference type="PIR" id="E91241">
    <property type="entry name" value="E91241"/>
</dbReference>
<dbReference type="RefSeq" id="NP_312928.1">
    <property type="nucleotide sequence ID" value="NC_002695.1"/>
</dbReference>
<dbReference type="RefSeq" id="WP_000023081.1">
    <property type="nucleotide sequence ID" value="NZ_VOAI01000072.1"/>
</dbReference>
<dbReference type="SMR" id="P0A6I5"/>
<dbReference type="STRING" id="155864.Z5545"/>
<dbReference type="GeneID" id="914967"/>
<dbReference type="GeneID" id="93777919"/>
<dbReference type="KEGG" id="ece:Z5545"/>
<dbReference type="KEGG" id="ecs:ECs_4901"/>
<dbReference type="PATRIC" id="fig|386585.9.peg.5125"/>
<dbReference type="eggNOG" id="COG1072">
    <property type="taxonomic scope" value="Bacteria"/>
</dbReference>
<dbReference type="HOGENOM" id="CLU_053818_1_1_6"/>
<dbReference type="OMA" id="MQRKGFP"/>
<dbReference type="UniPathway" id="UPA00241">
    <property type="reaction ID" value="UER00352"/>
</dbReference>
<dbReference type="Proteomes" id="UP000000558">
    <property type="component" value="Chromosome"/>
</dbReference>
<dbReference type="Proteomes" id="UP000002519">
    <property type="component" value="Chromosome"/>
</dbReference>
<dbReference type="GO" id="GO:0005737">
    <property type="term" value="C:cytoplasm"/>
    <property type="evidence" value="ECO:0007669"/>
    <property type="project" value="UniProtKB-SubCell"/>
</dbReference>
<dbReference type="GO" id="GO:0005524">
    <property type="term" value="F:ATP binding"/>
    <property type="evidence" value="ECO:0007669"/>
    <property type="project" value="UniProtKB-UniRule"/>
</dbReference>
<dbReference type="GO" id="GO:0004594">
    <property type="term" value="F:pantothenate kinase activity"/>
    <property type="evidence" value="ECO:0007669"/>
    <property type="project" value="UniProtKB-UniRule"/>
</dbReference>
<dbReference type="GO" id="GO:0015937">
    <property type="term" value="P:coenzyme A biosynthetic process"/>
    <property type="evidence" value="ECO:0007669"/>
    <property type="project" value="UniProtKB-UniRule"/>
</dbReference>
<dbReference type="CDD" id="cd02025">
    <property type="entry name" value="PanK"/>
    <property type="match status" value="1"/>
</dbReference>
<dbReference type="FunFam" id="3.40.50.300:FF:000242">
    <property type="entry name" value="Pantothenate kinase"/>
    <property type="match status" value="1"/>
</dbReference>
<dbReference type="Gene3D" id="3.40.50.300">
    <property type="entry name" value="P-loop containing nucleotide triphosphate hydrolases"/>
    <property type="match status" value="1"/>
</dbReference>
<dbReference type="HAMAP" id="MF_00215">
    <property type="entry name" value="Pantothen_kinase_1"/>
    <property type="match status" value="1"/>
</dbReference>
<dbReference type="InterPro" id="IPR027417">
    <property type="entry name" value="P-loop_NTPase"/>
</dbReference>
<dbReference type="InterPro" id="IPR004566">
    <property type="entry name" value="PanK"/>
</dbReference>
<dbReference type="InterPro" id="IPR006083">
    <property type="entry name" value="PRK/URK"/>
</dbReference>
<dbReference type="NCBIfam" id="TIGR00554">
    <property type="entry name" value="panK_bact"/>
    <property type="match status" value="1"/>
</dbReference>
<dbReference type="PANTHER" id="PTHR10285">
    <property type="entry name" value="URIDINE KINASE"/>
    <property type="match status" value="1"/>
</dbReference>
<dbReference type="Pfam" id="PF00485">
    <property type="entry name" value="PRK"/>
    <property type="match status" value="1"/>
</dbReference>
<dbReference type="PIRSF" id="PIRSF000545">
    <property type="entry name" value="Pantothenate_kin"/>
    <property type="match status" value="1"/>
</dbReference>
<dbReference type="SUPFAM" id="SSF52540">
    <property type="entry name" value="P-loop containing nucleoside triphosphate hydrolases"/>
    <property type="match status" value="1"/>
</dbReference>
<organism>
    <name type="scientific">Escherichia coli O157:H7</name>
    <dbReference type="NCBI Taxonomy" id="83334"/>
    <lineage>
        <taxon>Bacteria</taxon>
        <taxon>Pseudomonadati</taxon>
        <taxon>Pseudomonadota</taxon>
        <taxon>Gammaproteobacteria</taxon>
        <taxon>Enterobacterales</taxon>
        <taxon>Enterobacteriaceae</taxon>
        <taxon>Escherichia</taxon>
    </lineage>
</organism>
<keyword id="KW-0067">ATP-binding</keyword>
<keyword id="KW-0173">Coenzyme A biosynthesis</keyword>
<keyword id="KW-0963">Cytoplasm</keyword>
<keyword id="KW-0418">Kinase</keyword>
<keyword id="KW-0547">Nucleotide-binding</keyword>
<keyword id="KW-1185">Reference proteome</keyword>
<keyword id="KW-0808">Transferase</keyword>
<sequence>MSIKEQTLMTPYLQFDRNQWAALRDSVPMTLSEDEIARLKGINEDLSLEEVAEIYLPLSRLLNFYISSNLRRQAVLEQFLGTNGQRIPYIISIAGSVAVGKSTTARVLQALLSRWPEHRRVELITTDGFLHPNQVLKERGLMKKKGFPESYDMHRLVKFVSDLKSGVPNVTAPVYSHLIYDVIPDGDKTVVQPDILILEGLNVLQSGMDYPHDPHHVFVSDFVDFSIYVDAPEDLLQTWYINRFLKFREGAFTDPDSYFHNYAKLTKEEAIKTAMTLWKEINWLNLKQNILPTRERASLILTKSANHAVEEVRLRK</sequence>
<reference key="1">
    <citation type="journal article" date="2001" name="Nature">
        <title>Genome sequence of enterohaemorrhagic Escherichia coli O157:H7.</title>
        <authorList>
            <person name="Perna N.T."/>
            <person name="Plunkett G. III"/>
            <person name="Burland V."/>
            <person name="Mau B."/>
            <person name="Glasner J.D."/>
            <person name="Rose D.J."/>
            <person name="Mayhew G.F."/>
            <person name="Evans P.S."/>
            <person name="Gregor J."/>
            <person name="Kirkpatrick H.A."/>
            <person name="Posfai G."/>
            <person name="Hackett J."/>
            <person name="Klink S."/>
            <person name="Boutin A."/>
            <person name="Shao Y."/>
            <person name="Miller L."/>
            <person name="Grotbeck E.J."/>
            <person name="Davis N.W."/>
            <person name="Lim A."/>
            <person name="Dimalanta E.T."/>
            <person name="Potamousis K."/>
            <person name="Apodaca J."/>
            <person name="Anantharaman T.S."/>
            <person name="Lin J."/>
            <person name="Yen G."/>
            <person name="Schwartz D.C."/>
            <person name="Welch R.A."/>
            <person name="Blattner F.R."/>
        </authorList>
    </citation>
    <scope>NUCLEOTIDE SEQUENCE [LARGE SCALE GENOMIC DNA]</scope>
    <source>
        <strain>O157:H7 / EDL933 / ATCC 700927 / EHEC</strain>
    </source>
</reference>
<reference key="2">
    <citation type="journal article" date="2001" name="DNA Res.">
        <title>Complete genome sequence of enterohemorrhagic Escherichia coli O157:H7 and genomic comparison with a laboratory strain K-12.</title>
        <authorList>
            <person name="Hayashi T."/>
            <person name="Makino K."/>
            <person name="Ohnishi M."/>
            <person name="Kurokawa K."/>
            <person name="Ishii K."/>
            <person name="Yokoyama K."/>
            <person name="Han C.-G."/>
            <person name="Ohtsubo E."/>
            <person name="Nakayama K."/>
            <person name="Murata T."/>
            <person name="Tanaka M."/>
            <person name="Tobe T."/>
            <person name="Iida T."/>
            <person name="Takami H."/>
            <person name="Honda T."/>
            <person name="Sasakawa C."/>
            <person name="Ogasawara N."/>
            <person name="Yasunaga T."/>
            <person name="Kuhara S."/>
            <person name="Shiba T."/>
            <person name="Hattori M."/>
            <person name="Shinagawa H."/>
        </authorList>
    </citation>
    <scope>NUCLEOTIDE SEQUENCE [LARGE SCALE GENOMIC DNA]</scope>
    <source>
        <strain>O157:H7 / Sakai / RIMD 0509952 / EHEC</strain>
    </source>
</reference>
<feature type="chain" id="PRO_0000194428" description="Pantothenate kinase">
    <location>
        <begin position="1"/>
        <end position="316"/>
    </location>
</feature>
<feature type="binding site" evidence="2">
    <location>
        <begin position="95"/>
        <end position="102"/>
    </location>
    <ligand>
        <name>ATP</name>
        <dbReference type="ChEBI" id="CHEBI:30616"/>
    </ligand>
</feature>
<feature type="sequence conflict" description="In Ref. 1." evidence="3" ref="1">
    <original>MSIKEQ</original>
    <variation>PPETCL</variation>
    <location>
        <begin position="1"/>
        <end position="6"/>
    </location>
</feature>
<gene>
    <name type="primary">coaA</name>
    <name type="synonym">panK</name>
    <name type="synonym">rts</name>
    <name type="ordered locus">Z5545</name>
    <name type="ordered locus">ECs4901</name>
</gene>
<proteinExistence type="inferred from homology"/>
<protein>
    <recommendedName>
        <fullName>Pantothenate kinase</fullName>
        <ecNumber>2.7.1.33</ecNumber>
    </recommendedName>
    <alternativeName>
        <fullName>Pantothenic acid kinase</fullName>
    </alternativeName>
</protein>
<name>COAA_ECO57</name>